<accession>A8H2M6</accession>
<keyword id="KW-0001">2Fe-2S</keyword>
<keyword id="KW-0963">Cytoplasm</keyword>
<keyword id="KW-0408">Iron</keyword>
<keyword id="KW-0411">Iron-sulfur</keyword>
<keyword id="KW-0479">Metal-binding</keyword>
<keyword id="KW-0663">Pyridoxal phosphate</keyword>
<keyword id="KW-1185">Reference proteome</keyword>
<keyword id="KW-0808">Transferase</keyword>
<gene>
    <name evidence="1" type="primary">iscS</name>
    <name type="ordered locus">Spea_1488</name>
</gene>
<organism>
    <name type="scientific">Shewanella pealeana (strain ATCC 700345 / ANG-SQ1)</name>
    <dbReference type="NCBI Taxonomy" id="398579"/>
    <lineage>
        <taxon>Bacteria</taxon>
        <taxon>Pseudomonadati</taxon>
        <taxon>Pseudomonadota</taxon>
        <taxon>Gammaproteobacteria</taxon>
        <taxon>Alteromonadales</taxon>
        <taxon>Shewanellaceae</taxon>
        <taxon>Shewanella</taxon>
    </lineage>
</organism>
<comment type="function">
    <text evidence="1">Master enzyme that delivers sulfur to a number of partners involved in Fe-S cluster assembly, tRNA modification or cofactor biosynthesis. Catalyzes the removal of elemental sulfur atoms from cysteine to produce alanine. Functions as a sulfur delivery protein for Fe-S cluster synthesis onto IscU, an Fe-S scaffold assembly protein, as well as other S acceptor proteins.</text>
</comment>
<comment type="catalytic activity">
    <reaction evidence="1">
        <text>(sulfur carrier)-H + L-cysteine = (sulfur carrier)-SH + L-alanine</text>
        <dbReference type="Rhea" id="RHEA:43892"/>
        <dbReference type="Rhea" id="RHEA-COMP:14737"/>
        <dbReference type="Rhea" id="RHEA-COMP:14739"/>
        <dbReference type="ChEBI" id="CHEBI:29917"/>
        <dbReference type="ChEBI" id="CHEBI:35235"/>
        <dbReference type="ChEBI" id="CHEBI:57972"/>
        <dbReference type="ChEBI" id="CHEBI:64428"/>
        <dbReference type="EC" id="2.8.1.7"/>
    </reaction>
</comment>
<comment type="cofactor">
    <cofactor evidence="1">
        <name>pyridoxal 5'-phosphate</name>
        <dbReference type="ChEBI" id="CHEBI:597326"/>
    </cofactor>
</comment>
<comment type="pathway">
    <text evidence="1">Cofactor biosynthesis; iron-sulfur cluster biosynthesis.</text>
</comment>
<comment type="subunit">
    <text evidence="1">Homodimer. Forms a heterotetramer with IscU, interacts with other sulfur acceptors.</text>
</comment>
<comment type="subcellular location">
    <subcellularLocation>
        <location evidence="1">Cytoplasm</location>
    </subcellularLocation>
</comment>
<comment type="similarity">
    <text evidence="1">Belongs to the class-V pyridoxal-phosphate-dependent aminotransferase family. NifS/IscS subfamily.</text>
</comment>
<sequence length="404" mass="44724">MKLPIYLDYAATTPVDPRVAEKMMQCLTMDGIFGNPASRSHRYGWQAEEAVDIARNQVAELINADPREIVFTSGATESDNLAIKGVAHFYHKKGKHIITSKTEHKAVLDTCRQLEREGYEVTYLQPEPSGLIPVSMIEAAMREDTILVSIMQVNNEIGVIQDIDAIGELCRSRKIIFHVDAAQSAGKLPIDVQTTKVDLMSISGHKMYGPKGIGALYVSRKPRIRLEAAMHGGGHERGMRSGTLATHQIVGMGEAAAIAKADMEVDNERIRRLRDKLWNGINHIEETYINGDVEKRACGSLNVSFNFVEGESLMMALKDLAVSSGSACTSASLEPSYVLRALGLNDEMAHSSIRFSIGRFTTDEEIDHAIETIKESIGNLREMSPLWEMFKDGIDLDSVQWAHH</sequence>
<reference key="1">
    <citation type="submission" date="2007-10" db="EMBL/GenBank/DDBJ databases">
        <title>Complete sequence of Shewanella pealeana ATCC 700345.</title>
        <authorList>
            <consortium name="US DOE Joint Genome Institute"/>
            <person name="Copeland A."/>
            <person name="Lucas S."/>
            <person name="Lapidus A."/>
            <person name="Barry K."/>
            <person name="Glavina del Rio T."/>
            <person name="Dalin E."/>
            <person name="Tice H."/>
            <person name="Pitluck S."/>
            <person name="Chertkov O."/>
            <person name="Brettin T."/>
            <person name="Bruce D."/>
            <person name="Detter J.C."/>
            <person name="Han C."/>
            <person name="Schmutz J."/>
            <person name="Larimer F."/>
            <person name="Land M."/>
            <person name="Hauser L."/>
            <person name="Kyrpides N."/>
            <person name="Kim E."/>
            <person name="Zhao J.-S.Z."/>
            <person name="Manno D."/>
            <person name="Hawari J."/>
            <person name="Richardson P."/>
        </authorList>
    </citation>
    <scope>NUCLEOTIDE SEQUENCE [LARGE SCALE GENOMIC DNA]</scope>
    <source>
        <strain>ATCC 700345 / ANG-SQ1</strain>
    </source>
</reference>
<feature type="chain" id="PRO_1000079213" description="Cysteine desulfurase IscS">
    <location>
        <begin position="1"/>
        <end position="404"/>
    </location>
</feature>
<feature type="active site" description="Cysteine persulfide intermediate" evidence="1">
    <location>
        <position position="328"/>
    </location>
</feature>
<feature type="binding site" evidence="1">
    <location>
        <begin position="75"/>
        <end position="76"/>
    </location>
    <ligand>
        <name>pyridoxal 5'-phosphate</name>
        <dbReference type="ChEBI" id="CHEBI:597326"/>
    </ligand>
</feature>
<feature type="binding site" evidence="1">
    <location>
        <position position="155"/>
    </location>
    <ligand>
        <name>pyridoxal 5'-phosphate</name>
        <dbReference type="ChEBI" id="CHEBI:597326"/>
    </ligand>
</feature>
<feature type="binding site" evidence="1">
    <location>
        <position position="183"/>
    </location>
    <ligand>
        <name>pyridoxal 5'-phosphate</name>
        <dbReference type="ChEBI" id="CHEBI:597326"/>
    </ligand>
</feature>
<feature type="binding site" evidence="1">
    <location>
        <begin position="203"/>
        <end position="205"/>
    </location>
    <ligand>
        <name>pyridoxal 5'-phosphate</name>
        <dbReference type="ChEBI" id="CHEBI:597326"/>
    </ligand>
</feature>
<feature type="binding site" evidence="1">
    <location>
        <position position="243"/>
    </location>
    <ligand>
        <name>pyridoxal 5'-phosphate</name>
        <dbReference type="ChEBI" id="CHEBI:597326"/>
    </ligand>
</feature>
<feature type="binding site" description="via persulfide group" evidence="1">
    <location>
        <position position="328"/>
    </location>
    <ligand>
        <name>[2Fe-2S] cluster</name>
        <dbReference type="ChEBI" id="CHEBI:190135"/>
        <note>ligand shared with IscU</note>
    </ligand>
</feature>
<feature type="modified residue" description="N6-(pyridoxal phosphate)lysine" evidence="1">
    <location>
        <position position="206"/>
    </location>
</feature>
<name>ISCS_SHEPA</name>
<proteinExistence type="inferred from homology"/>
<dbReference type="EC" id="2.8.1.7" evidence="1"/>
<dbReference type="EMBL" id="CP000851">
    <property type="protein sequence ID" value="ABV86813.1"/>
    <property type="molecule type" value="Genomic_DNA"/>
</dbReference>
<dbReference type="RefSeq" id="WP_012154739.1">
    <property type="nucleotide sequence ID" value="NC_009901.1"/>
</dbReference>
<dbReference type="SMR" id="A8H2M6"/>
<dbReference type="STRING" id="398579.Spea_1488"/>
<dbReference type="KEGG" id="spl:Spea_1488"/>
<dbReference type="eggNOG" id="COG1104">
    <property type="taxonomic scope" value="Bacteria"/>
</dbReference>
<dbReference type="HOGENOM" id="CLU_003433_0_2_6"/>
<dbReference type="OrthoDB" id="9808002at2"/>
<dbReference type="UniPathway" id="UPA00266"/>
<dbReference type="Proteomes" id="UP000002608">
    <property type="component" value="Chromosome"/>
</dbReference>
<dbReference type="GO" id="GO:1990221">
    <property type="term" value="C:L-cysteine desulfurase complex"/>
    <property type="evidence" value="ECO:0007669"/>
    <property type="project" value="UniProtKB-ARBA"/>
</dbReference>
<dbReference type="GO" id="GO:0051537">
    <property type="term" value="F:2 iron, 2 sulfur cluster binding"/>
    <property type="evidence" value="ECO:0007669"/>
    <property type="project" value="UniProtKB-UniRule"/>
</dbReference>
<dbReference type="GO" id="GO:0031071">
    <property type="term" value="F:cysteine desulfurase activity"/>
    <property type="evidence" value="ECO:0007669"/>
    <property type="project" value="UniProtKB-UniRule"/>
</dbReference>
<dbReference type="GO" id="GO:0046872">
    <property type="term" value="F:metal ion binding"/>
    <property type="evidence" value="ECO:0007669"/>
    <property type="project" value="UniProtKB-KW"/>
</dbReference>
<dbReference type="GO" id="GO:0030170">
    <property type="term" value="F:pyridoxal phosphate binding"/>
    <property type="evidence" value="ECO:0007669"/>
    <property type="project" value="UniProtKB-UniRule"/>
</dbReference>
<dbReference type="GO" id="GO:0044571">
    <property type="term" value="P:[2Fe-2S] cluster assembly"/>
    <property type="evidence" value="ECO:0007669"/>
    <property type="project" value="UniProtKB-UniRule"/>
</dbReference>
<dbReference type="FunFam" id="3.40.640.10:FF:000003">
    <property type="entry name" value="Cysteine desulfurase IscS"/>
    <property type="match status" value="1"/>
</dbReference>
<dbReference type="FunFam" id="3.90.1150.10:FF:000002">
    <property type="entry name" value="Cysteine desulfurase IscS"/>
    <property type="match status" value="1"/>
</dbReference>
<dbReference type="Gene3D" id="3.90.1150.10">
    <property type="entry name" value="Aspartate Aminotransferase, domain 1"/>
    <property type="match status" value="1"/>
</dbReference>
<dbReference type="Gene3D" id="3.40.640.10">
    <property type="entry name" value="Type I PLP-dependent aspartate aminotransferase-like (Major domain)"/>
    <property type="match status" value="1"/>
</dbReference>
<dbReference type="HAMAP" id="MF_00331">
    <property type="entry name" value="Cys_desulf_IscS"/>
    <property type="match status" value="1"/>
</dbReference>
<dbReference type="InterPro" id="IPR000192">
    <property type="entry name" value="Aminotrans_V_dom"/>
</dbReference>
<dbReference type="InterPro" id="IPR020578">
    <property type="entry name" value="Aminotrans_V_PyrdxlP_BS"/>
</dbReference>
<dbReference type="InterPro" id="IPR010240">
    <property type="entry name" value="Cys_deSase_IscS"/>
</dbReference>
<dbReference type="InterPro" id="IPR016454">
    <property type="entry name" value="Cysteine_dSase"/>
</dbReference>
<dbReference type="InterPro" id="IPR015424">
    <property type="entry name" value="PyrdxlP-dep_Trfase"/>
</dbReference>
<dbReference type="InterPro" id="IPR015421">
    <property type="entry name" value="PyrdxlP-dep_Trfase_major"/>
</dbReference>
<dbReference type="InterPro" id="IPR015422">
    <property type="entry name" value="PyrdxlP-dep_Trfase_small"/>
</dbReference>
<dbReference type="NCBIfam" id="TIGR02006">
    <property type="entry name" value="IscS"/>
    <property type="match status" value="1"/>
</dbReference>
<dbReference type="NCBIfam" id="NF010611">
    <property type="entry name" value="PRK14012.1"/>
    <property type="match status" value="1"/>
</dbReference>
<dbReference type="PANTHER" id="PTHR11601:SF34">
    <property type="entry name" value="CYSTEINE DESULFURASE"/>
    <property type="match status" value="1"/>
</dbReference>
<dbReference type="PANTHER" id="PTHR11601">
    <property type="entry name" value="CYSTEINE DESULFURYLASE FAMILY MEMBER"/>
    <property type="match status" value="1"/>
</dbReference>
<dbReference type="Pfam" id="PF00266">
    <property type="entry name" value="Aminotran_5"/>
    <property type="match status" value="1"/>
</dbReference>
<dbReference type="PIRSF" id="PIRSF005572">
    <property type="entry name" value="NifS"/>
    <property type="match status" value="1"/>
</dbReference>
<dbReference type="SUPFAM" id="SSF53383">
    <property type="entry name" value="PLP-dependent transferases"/>
    <property type="match status" value="1"/>
</dbReference>
<dbReference type="PROSITE" id="PS00595">
    <property type="entry name" value="AA_TRANSFER_CLASS_5"/>
    <property type="match status" value="1"/>
</dbReference>
<evidence type="ECO:0000255" key="1">
    <source>
        <dbReference type="HAMAP-Rule" id="MF_00331"/>
    </source>
</evidence>
<protein>
    <recommendedName>
        <fullName evidence="1">Cysteine desulfurase IscS</fullName>
        <ecNumber evidence="1">2.8.1.7</ecNumber>
    </recommendedName>
</protein>